<evidence type="ECO:0000255" key="1">
    <source>
        <dbReference type="HAMAP-Rule" id="MF_01017"/>
    </source>
</evidence>
<feature type="chain" id="PRO_1000200641" description="NAD(P)H dehydrogenase (quinone)">
    <location>
        <begin position="1"/>
        <end position="198"/>
    </location>
</feature>
<feature type="domain" description="Flavodoxin-like" evidence="1">
    <location>
        <begin position="4"/>
        <end position="189"/>
    </location>
</feature>
<feature type="binding site" evidence="1">
    <location>
        <begin position="10"/>
        <end position="15"/>
    </location>
    <ligand>
        <name>FMN</name>
        <dbReference type="ChEBI" id="CHEBI:58210"/>
    </ligand>
</feature>
<feature type="binding site" evidence="1">
    <location>
        <position position="12"/>
    </location>
    <ligand>
        <name>NAD(+)</name>
        <dbReference type="ChEBI" id="CHEBI:57540"/>
    </ligand>
</feature>
<feature type="binding site" evidence="1">
    <location>
        <begin position="78"/>
        <end position="80"/>
    </location>
    <ligand>
        <name>FMN</name>
        <dbReference type="ChEBI" id="CHEBI:58210"/>
    </ligand>
</feature>
<feature type="binding site" evidence="1">
    <location>
        <position position="98"/>
    </location>
    <ligand>
        <name>substrate</name>
    </ligand>
</feature>
<feature type="binding site" evidence="1">
    <location>
        <begin position="113"/>
        <end position="118"/>
    </location>
    <ligand>
        <name>FMN</name>
        <dbReference type="ChEBI" id="CHEBI:58210"/>
    </ligand>
</feature>
<feature type="binding site" evidence="1">
    <location>
        <position position="133"/>
    </location>
    <ligand>
        <name>FMN</name>
        <dbReference type="ChEBI" id="CHEBI:58210"/>
    </ligand>
</feature>
<organism>
    <name type="scientific">Salmonella dublin (strain CT_02021853)</name>
    <dbReference type="NCBI Taxonomy" id="439851"/>
    <lineage>
        <taxon>Bacteria</taxon>
        <taxon>Pseudomonadati</taxon>
        <taxon>Pseudomonadota</taxon>
        <taxon>Gammaproteobacteria</taxon>
        <taxon>Enterobacterales</taxon>
        <taxon>Enterobacteriaceae</taxon>
        <taxon>Salmonella</taxon>
    </lineage>
</organism>
<protein>
    <recommendedName>
        <fullName evidence="1">NAD(P)H dehydrogenase (quinone)</fullName>
        <ecNumber evidence="1">1.6.5.2</ecNumber>
    </recommendedName>
    <alternativeName>
        <fullName>Flavoprotein WrbA</fullName>
    </alternativeName>
    <alternativeName>
        <fullName evidence="1">NAD(P)H:quinone oxidoreductase</fullName>
        <shortName evidence="1">NQO</shortName>
    </alternativeName>
</protein>
<sequence>MAKILVLYYSMYGHIETMAHAVAEGAKKVDGAEVIIKRVPETMPPEIFAKAGGKTQNAPVATPQELADYDAIIFGTPTRFGNMSGQMRTFLDQTGGLWASGALYGKLGSVFSSTGTGGGQEQTITSTWTTLAHHGMVIVPIGYAAQELFDVSQVRGGTPYGATTIAGGDGSRQPSQEELSIARYQGEYVAGLAVKLNG</sequence>
<dbReference type="EC" id="1.6.5.2" evidence="1"/>
<dbReference type="EMBL" id="CP001144">
    <property type="protein sequence ID" value="ACH77361.1"/>
    <property type="molecule type" value="Genomic_DNA"/>
</dbReference>
<dbReference type="SMR" id="B5FR47"/>
<dbReference type="KEGG" id="sed:SeD_A1194"/>
<dbReference type="HOGENOM" id="CLU_051402_0_2_6"/>
<dbReference type="Proteomes" id="UP000008322">
    <property type="component" value="Chromosome"/>
</dbReference>
<dbReference type="GO" id="GO:0016020">
    <property type="term" value="C:membrane"/>
    <property type="evidence" value="ECO:0007669"/>
    <property type="project" value="TreeGrafter"/>
</dbReference>
<dbReference type="GO" id="GO:0050660">
    <property type="term" value="F:flavin adenine dinucleotide binding"/>
    <property type="evidence" value="ECO:0007669"/>
    <property type="project" value="UniProtKB-UniRule"/>
</dbReference>
<dbReference type="GO" id="GO:0010181">
    <property type="term" value="F:FMN binding"/>
    <property type="evidence" value="ECO:0007669"/>
    <property type="project" value="InterPro"/>
</dbReference>
<dbReference type="GO" id="GO:0051287">
    <property type="term" value="F:NAD binding"/>
    <property type="evidence" value="ECO:0007669"/>
    <property type="project" value="UniProtKB-UniRule"/>
</dbReference>
<dbReference type="GO" id="GO:0050136">
    <property type="term" value="F:NADH:ubiquinone reductase (non-electrogenic) activity"/>
    <property type="evidence" value="ECO:0007669"/>
    <property type="project" value="RHEA"/>
</dbReference>
<dbReference type="GO" id="GO:0050661">
    <property type="term" value="F:NADP binding"/>
    <property type="evidence" value="ECO:0007669"/>
    <property type="project" value="UniProtKB-UniRule"/>
</dbReference>
<dbReference type="GO" id="GO:0008753">
    <property type="term" value="F:NADPH dehydrogenase (quinone) activity"/>
    <property type="evidence" value="ECO:0007669"/>
    <property type="project" value="RHEA"/>
</dbReference>
<dbReference type="FunFam" id="3.40.50.360:FF:000004">
    <property type="entry name" value="NAD(P)H dehydrogenase (quinone)"/>
    <property type="match status" value="1"/>
</dbReference>
<dbReference type="Gene3D" id="3.40.50.360">
    <property type="match status" value="1"/>
</dbReference>
<dbReference type="HAMAP" id="MF_01017">
    <property type="entry name" value="NQOR"/>
    <property type="match status" value="1"/>
</dbReference>
<dbReference type="InterPro" id="IPR008254">
    <property type="entry name" value="Flavodoxin/NO_synth"/>
</dbReference>
<dbReference type="InterPro" id="IPR029039">
    <property type="entry name" value="Flavoprotein-like_sf"/>
</dbReference>
<dbReference type="InterPro" id="IPR010089">
    <property type="entry name" value="Flavoprotein_WrbA-like"/>
</dbReference>
<dbReference type="InterPro" id="IPR005025">
    <property type="entry name" value="FMN_Rdtase-like_dom"/>
</dbReference>
<dbReference type="InterPro" id="IPR037513">
    <property type="entry name" value="NQO"/>
</dbReference>
<dbReference type="NCBIfam" id="TIGR01755">
    <property type="entry name" value="flav_wrbA"/>
    <property type="match status" value="1"/>
</dbReference>
<dbReference type="NCBIfam" id="NF002999">
    <property type="entry name" value="PRK03767.1"/>
    <property type="match status" value="1"/>
</dbReference>
<dbReference type="PANTHER" id="PTHR30546">
    <property type="entry name" value="FLAVODOXIN-RELATED PROTEIN WRBA-RELATED"/>
    <property type="match status" value="1"/>
</dbReference>
<dbReference type="PANTHER" id="PTHR30546:SF23">
    <property type="entry name" value="FLAVOPROTEIN-LIKE PROTEIN YCP4-RELATED"/>
    <property type="match status" value="1"/>
</dbReference>
<dbReference type="Pfam" id="PF03358">
    <property type="entry name" value="FMN_red"/>
    <property type="match status" value="1"/>
</dbReference>
<dbReference type="SUPFAM" id="SSF52218">
    <property type="entry name" value="Flavoproteins"/>
    <property type="match status" value="1"/>
</dbReference>
<dbReference type="PROSITE" id="PS50902">
    <property type="entry name" value="FLAVODOXIN_LIKE"/>
    <property type="match status" value="1"/>
</dbReference>
<keyword id="KW-0285">Flavoprotein</keyword>
<keyword id="KW-0288">FMN</keyword>
<keyword id="KW-0520">NAD</keyword>
<keyword id="KW-0521">NADP</keyword>
<keyword id="KW-0547">Nucleotide-binding</keyword>
<keyword id="KW-0560">Oxidoreductase</keyword>
<reference key="1">
    <citation type="journal article" date="2011" name="J. Bacteriol.">
        <title>Comparative genomics of 28 Salmonella enterica isolates: evidence for CRISPR-mediated adaptive sublineage evolution.</title>
        <authorList>
            <person name="Fricke W.F."/>
            <person name="Mammel M.K."/>
            <person name="McDermott P.F."/>
            <person name="Tartera C."/>
            <person name="White D.G."/>
            <person name="Leclerc J.E."/>
            <person name="Ravel J."/>
            <person name="Cebula T.A."/>
        </authorList>
    </citation>
    <scope>NUCLEOTIDE SEQUENCE [LARGE SCALE GENOMIC DNA]</scope>
    <source>
        <strain>CT_02021853</strain>
    </source>
</reference>
<gene>
    <name type="ordered locus">SeD_A1194</name>
</gene>
<name>NQOR_SALDC</name>
<comment type="catalytic activity">
    <reaction evidence="1">
        <text>a quinone + NADH + H(+) = a quinol + NAD(+)</text>
        <dbReference type="Rhea" id="RHEA:46160"/>
        <dbReference type="ChEBI" id="CHEBI:15378"/>
        <dbReference type="ChEBI" id="CHEBI:24646"/>
        <dbReference type="ChEBI" id="CHEBI:57540"/>
        <dbReference type="ChEBI" id="CHEBI:57945"/>
        <dbReference type="ChEBI" id="CHEBI:132124"/>
        <dbReference type="EC" id="1.6.5.2"/>
    </reaction>
</comment>
<comment type="catalytic activity">
    <reaction evidence="1">
        <text>a quinone + NADPH + H(+) = a quinol + NADP(+)</text>
        <dbReference type="Rhea" id="RHEA:46164"/>
        <dbReference type="ChEBI" id="CHEBI:15378"/>
        <dbReference type="ChEBI" id="CHEBI:24646"/>
        <dbReference type="ChEBI" id="CHEBI:57783"/>
        <dbReference type="ChEBI" id="CHEBI:58349"/>
        <dbReference type="ChEBI" id="CHEBI:132124"/>
        <dbReference type="EC" id="1.6.5.2"/>
    </reaction>
</comment>
<comment type="cofactor">
    <cofactor evidence="1">
        <name>FMN</name>
        <dbReference type="ChEBI" id="CHEBI:58210"/>
    </cofactor>
    <text evidence="1">Binds 1 FMN per monomer.</text>
</comment>
<comment type="similarity">
    <text evidence="1">Belongs to the WrbA family.</text>
</comment>
<proteinExistence type="inferred from homology"/>
<accession>B5FR47</accession>